<evidence type="ECO:0000250" key="1">
    <source>
        <dbReference type="UniProtKB" id="Q9NPJ1"/>
    </source>
</evidence>
<evidence type="ECO:0000255" key="2"/>
<evidence type="ECO:0000269" key="3">
    <source>
    </source>
</evidence>
<evidence type="ECO:0000269" key="4">
    <source>
    </source>
</evidence>
<evidence type="ECO:0000269" key="5">
    <source>
    </source>
</evidence>
<evidence type="ECO:0000269" key="6">
    <source>
    </source>
</evidence>
<evidence type="ECO:0000305" key="7"/>
<feature type="chain" id="PRO_0000128416" description="Molecular chaperone MKKS">
    <location>
        <begin position="1"/>
        <end position="570"/>
    </location>
</feature>
<feature type="region of interest" description="Substrate-binding apical domain" evidence="1">
    <location>
        <begin position="198"/>
        <end position="370"/>
    </location>
</feature>
<feature type="binding site" evidence="2">
    <location>
        <begin position="192"/>
        <end position="199"/>
    </location>
    <ligand>
        <name>ATP</name>
        <dbReference type="ChEBI" id="CHEBI:30616"/>
    </ligand>
</feature>
<feature type="sequence conflict" description="In Ref. 1; AAF73965." evidence="7" ref="1">
    <original>K</original>
    <variation>R</variation>
    <location>
        <position position="302"/>
    </location>
</feature>
<protein>
    <recommendedName>
        <fullName evidence="7">Molecular chaperone MKKS</fullName>
    </recommendedName>
    <alternativeName>
        <fullName>McKusick-Kaufman/Bardet-Biedl syndromes putative chaperonin</fullName>
    </alternativeName>
    <alternativeName>
        <fullName>Protein Bbs6 homolog</fullName>
    </alternativeName>
</protein>
<accession>Q9JI70</accession>
<accession>Q8BGQ3</accession>
<dbReference type="EMBL" id="AF254074">
    <property type="protein sequence ID" value="AAF73965.1"/>
    <property type="molecule type" value="mRNA"/>
</dbReference>
<dbReference type="EMBL" id="AK032528">
    <property type="protein sequence ID" value="BAC27912.1"/>
    <property type="molecule type" value="mRNA"/>
</dbReference>
<dbReference type="EMBL" id="AK032554">
    <property type="protein sequence ID" value="BAC27921.1"/>
    <property type="molecule type" value="mRNA"/>
</dbReference>
<dbReference type="EMBL" id="AL731706">
    <property type="status" value="NOT_ANNOTATED_CDS"/>
    <property type="molecule type" value="Genomic_DNA"/>
</dbReference>
<dbReference type="EMBL" id="BC117836">
    <property type="protein sequence ID" value="AAI17837.1"/>
    <property type="molecule type" value="mRNA"/>
</dbReference>
<dbReference type="CCDS" id="CCDS16794.1"/>
<dbReference type="RefSeq" id="NP_001135418.1">
    <property type="nucleotide sequence ID" value="NM_001141946.1"/>
</dbReference>
<dbReference type="RefSeq" id="NP_067502.2">
    <property type="nucleotide sequence ID" value="NM_021527.2"/>
</dbReference>
<dbReference type="RefSeq" id="XP_006500033.1">
    <property type="nucleotide sequence ID" value="XM_006499970.1"/>
</dbReference>
<dbReference type="RefSeq" id="XP_011238023.1">
    <property type="nucleotide sequence ID" value="XM_011239721.1"/>
</dbReference>
<dbReference type="RefSeq" id="XP_036018330.1">
    <property type="nucleotide sequence ID" value="XM_036162437.1"/>
</dbReference>
<dbReference type="RefSeq" id="XP_036018331.1">
    <property type="nucleotide sequence ID" value="XM_036162438.1"/>
</dbReference>
<dbReference type="SMR" id="Q9JI70"/>
<dbReference type="BioGRID" id="208497">
    <property type="interactions" value="1"/>
</dbReference>
<dbReference type="DIP" id="DIP-60355N"/>
<dbReference type="FunCoup" id="Q9JI70">
    <property type="interactions" value="736"/>
</dbReference>
<dbReference type="IntAct" id="Q9JI70">
    <property type="interactions" value="5"/>
</dbReference>
<dbReference type="STRING" id="10090.ENSMUSP00000105716"/>
<dbReference type="GlyGen" id="Q9JI70">
    <property type="glycosylation" value="2 sites, 2 N-linked glycans (2 sites)"/>
</dbReference>
<dbReference type="iPTMnet" id="Q9JI70"/>
<dbReference type="PhosphoSitePlus" id="Q9JI70"/>
<dbReference type="PaxDb" id="10090-ENSMUSP00000105716"/>
<dbReference type="ProteomicsDB" id="295951"/>
<dbReference type="Antibodypedia" id="24160">
    <property type="antibodies" value="149 antibodies from 24 providers"/>
</dbReference>
<dbReference type="DNASU" id="59030"/>
<dbReference type="Ensembl" id="ENSMUST00000028730.13">
    <property type="protein sequence ID" value="ENSMUSP00000028730.7"/>
    <property type="gene ID" value="ENSMUSG00000027274.17"/>
</dbReference>
<dbReference type="Ensembl" id="ENSMUST00000110089.9">
    <property type="protein sequence ID" value="ENSMUSP00000105716.3"/>
    <property type="gene ID" value="ENSMUSG00000027274.17"/>
</dbReference>
<dbReference type="GeneID" id="59030"/>
<dbReference type="KEGG" id="mmu:59030"/>
<dbReference type="UCSC" id="uc008moq.2">
    <property type="organism name" value="mouse"/>
</dbReference>
<dbReference type="AGR" id="MGI:1891836"/>
<dbReference type="CTD" id="8195"/>
<dbReference type="MGI" id="MGI:1891836">
    <property type="gene designation" value="Mkks"/>
</dbReference>
<dbReference type="VEuPathDB" id="HostDB:ENSMUSG00000027274"/>
<dbReference type="eggNOG" id="KOG0360">
    <property type="taxonomic scope" value="Eukaryota"/>
</dbReference>
<dbReference type="GeneTree" id="ENSGT00390000007214"/>
<dbReference type="HOGENOM" id="CLU_478131_0_0_1"/>
<dbReference type="InParanoid" id="Q9JI70"/>
<dbReference type="OMA" id="LFVCQKV"/>
<dbReference type="OrthoDB" id="528704at2759"/>
<dbReference type="PhylomeDB" id="Q9JI70"/>
<dbReference type="TreeFam" id="TF329106"/>
<dbReference type="BioGRID-ORCS" id="59030">
    <property type="hits" value="3 hits in 77 CRISPR screens"/>
</dbReference>
<dbReference type="CD-CODE" id="01CA17F3">
    <property type="entry name" value="Centrosome"/>
</dbReference>
<dbReference type="ChiTaRS" id="Mkks">
    <property type="organism name" value="mouse"/>
</dbReference>
<dbReference type="PRO" id="PR:Q9JI70"/>
<dbReference type="Proteomes" id="UP000000589">
    <property type="component" value="Chromosome 2"/>
</dbReference>
<dbReference type="RNAct" id="Q9JI70">
    <property type="molecule type" value="protein"/>
</dbReference>
<dbReference type="Bgee" id="ENSMUSG00000027274">
    <property type="expression patterns" value="Expressed in dentate gyrus of hippocampal formation granule cell and 206 other cell types or tissues"/>
</dbReference>
<dbReference type="GO" id="GO:0005813">
    <property type="term" value="C:centrosome"/>
    <property type="evidence" value="ECO:0007669"/>
    <property type="project" value="UniProtKB-SubCell"/>
</dbReference>
<dbReference type="GO" id="GO:0036064">
    <property type="term" value="C:ciliary basal body"/>
    <property type="evidence" value="ECO:0000314"/>
    <property type="project" value="MGI"/>
</dbReference>
<dbReference type="GO" id="GO:0005737">
    <property type="term" value="C:cytoplasm"/>
    <property type="evidence" value="ECO:0000250"/>
    <property type="project" value="UniProtKB"/>
</dbReference>
<dbReference type="GO" id="GO:0005829">
    <property type="term" value="C:cytosol"/>
    <property type="evidence" value="ECO:0007669"/>
    <property type="project" value="UniProtKB-SubCell"/>
</dbReference>
<dbReference type="GO" id="GO:1902636">
    <property type="term" value="C:kinociliary basal body"/>
    <property type="evidence" value="ECO:0000314"/>
    <property type="project" value="MGI"/>
</dbReference>
<dbReference type="GO" id="GO:0031514">
    <property type="term" value="C:motile cilium"/>
    <property type="evidence" value="ECO:0000315"/>
    <property type="project" value="BHF-UCL"/>
</dbReference>
<dbReference type="GO" id="GO:0005634">
    <property type="term" value="C:nucleus"/>
    <property type="evidence" value="ECO:0000250"/>
    <property type="project" value="UniProtKB"/>
</dbReference>
<dbReference type="GO" id="GO:0005524">
    <property type="term" value="F:ATP binding"/>
    <property type="evidence" value="ECO:0007669"/>
    <property type="project" value="UniProtKB-KW"/>
</dbReference>
<dbReference type="GO" id="GO:0061629">
    <property type="term" value="F:RNA polymerase II-specific DNA-binding transcription factor binding"/>
    <property type="evidence" value="ECO:0000266"/>
    <property type="project" value="MGI"/>
</dbReference>
<dbReference type="GO" id="GO:0051082">
    <property type="term" value="F:unfolded protein binding"/>
    <property type="evidence" value="ECO:0007669"/>
    <property type="project" value="InterPro"/>
</dbReference>
<dbReference type="GO" id="GO:0014824">
    <property type="term" value="P:artery smooth muscle contraction"/>
    <property type="evidence" value="ECO:0000315"/>
    <property type="project" value="MGI"/>
</dbReference>
<dbReference type="GO" id="GO:0048854">
    <property type="term" value="P:brain morphogenesis"/>
    <property type="evidence" value="ECO:0000315"/>
    <property type="project" value="MGI"/>
</dbReference>
<dbReference type="GO" id="GO:0051216">
    <property type="term" value="P:cartilage development"/>
    <property type="evidence" value="ECO:0000315"/>
    <property type="project" value="MGI"/>
</dbReference>
<dbReference type="GO" id="GO:0021987">
    <property type="term" value="P:cerebral cortex development"/>
    <property type="evidence" value="ECO:0000315"/>
    <property type="project" value="MGI"/>
</dbReference>
<dbReference type="GO" id="GO:0051131">
    <property type="term" value="P:chaperone-mediated protein complex assembly"/>
    <property type="evidence" value="ECO:0000315"/>
    <property type="project" value="MGI"/>
</dbReference>
<dbReference type="GO" id="GO:0060271">
    <property type="term" value="P:cilium assembly"/>
    <property type="evidence" value="ECO:0000315"/>
    <property type="project" value="BHF-UCL"/>
</dbReference>
<dbReference type="GO" id="GO:0050910">
    <property type="term" value="P:detection of mechanical stimulus involved in sensory perception of sound"/>
    <property type="evidence" value="ECO:0000315"/>
    <property type="project" value="MGI"/>
</dbReference>
<dbReference type="GO" id="GO:0060324">
    <property type="term" value="P:face development"/>
    <property type="evidence" value="ECO:0000315"/>
    <property type="project" value="MGI"/>
</dbReference>
<dbReference type="GO" id="GO:0045444">
    <property type="term" value="P:fat cell differentiation"/>
    <property type="evidence" value="ECO:0000270"/>
    <property type="project" value="BHF-UCL"/>
</dbReference>
<dbReference type="GO" id="GO:0010467">
    <property type="term" value="P:gene expression"/>
    <property type="evidence" value="ECO:0000315"/>
    <property type="project" value="MGI"/>
</dbReference>
<dbReference type="GO" id="GO:0021766">
    <property type="term" value="P:hippocampus development"/>
    <property type="evidence" value="ECO:0000315"/>
    <property type="project" value="MGI"/>
</dbReference>
<dbReference type="GO" id="GO:0033210">
    <property type="term" value="P:leptin-mediated signaling pathway"/>
    <property type="evidence" value="ECO:0000315"/>
    <property type="project" value="MGI"/>
</dbReference>
<dbReference type="GO" id="GO:0030837">
    <property type="term" value="P:negative regulation of actin filament polymerization"/>
    <property type="evidence" value="ECO:0000315"/>
    <property type="project" value="MGI"/>
</dbReference>
<dbReference type="GO" id="GO:0038108">
    <property type="term" value="P:negative regulation of appetite by leptin-mediated signaling pathway"/>
    <property type="evidence" value="ECO:0000315"/>
    <property type="project" value="BHF-UCL"/>
</dbReference>
<dbReference type="GO" id="GO:0045776">
    <property type="term" value="P:negative regulation of blood pressure"/>
    <property type="evidence" value="ECO:0000315"/>
    <property type="project" value="MGI"/>
</dbReference>
<dbReference type="GO" id="GO:0010629">
    <property type="term" value="P:negative regulation of gene expression"/>
    <property type="evidence" value="ECO:0000315"/>
    <property type="project" value="MGI"/>
</dbReference>
<dbReference type="GO" id="GO:1905515">
    <property type="term" value="P:non-motile cilium assembly"/>
    <property type="evidence" value="ECO:0000315"/>
    <property type="project" value="MGI"/>
</dbReference>
<dbReference type="GO" id="GO:0045494">
    <property type="term" value="P:photoreceptor cell maintenance"/>
    <property type="evidence" value="ECO:0000315"/>
    <property type="project" value="MGI"/>
</dbReference>
<dbReference type="GO" id="GO:0040018">
    <property type="term" value="P:positive regulation of multicellular organism growth"/>
    <property type="evidence" value="ECO:0000315"/>
    <property type="project" value="MGI"/>
</dbReference>
<dbReference type="GO" id="GO:0006457">
    <property type="term" value="P:protein folding"/>
    <property type="evidence" value="ECO:0007669"/>
    <property type="project" value="InterPro"/>
</dbReference>
<dbReference type="GO" id="GO:0060296">
    <property type="term" value="P:regulation of cilium beat frequency involved in ciliary motility"/>
    <property type="evidence" value="ECO:0000315"/>
    <property type="project" value="BHF-UCL"/>
</dbReference>
<dbReference type="GO" id="GO:0051492">
    <property type="term" value="P:regulation of stress fiber assembly"/>
    <property type="evidence" value="ECO:0000315"/>
    <property type="project" value="MGI"/>
</dbReference>
<dbReference type="GO" id="GO:1902140">
    <property type="term" value="P:response to inositol"/>
    <property type="evidence" value="ECO:0000314"/>
    <property type="project" value="MGI"/>
</dbReference>
<dbReference type="GO" id="GO:0044321">
    <property type="term" value="P:response to leptin"/>
    <property type="evidence" value="ECO:0000315"/>
    <property type="project" value="MGI"/>
</dbReference>
<dbReference type="GO" id="GO:0007608">
    <property type="term" value="P:sensory perception of smell"/>
    <property type="evidence" value="ECO:0000315"/>
    <property type="project" value="MGI"/>
</dbReference>
<dbReference type="GO" id="GO:0035176">
    <property type="term" value="P:social behavior"/>
    <property type="evidence" value="ECO:0000315"/>
    <property type="project" value="MGI"/>
</dbReference>
<dbReference type="GO" id="GO:0007286">
    <property type="term" value="P:spermatid development"/>
    <property type="evidence" value="ECO:0000315"/>
    <property type="project" value="MGI"/>
</dbReference>
<dbReference type="GO" id="GO:0021756">
    <property type="term" value="P:striatum development"/>
    <property type="evidence" value="ECO:0000315"/>
    <property type="project" value="MGI"/>
</dbReference>
<dbReference type="GO" id="GO:0042311">
    <property type="term" value="P:vasodilation"/>
    <property type="evidence" value="ECO:0000315"/>
    <property type="project" value="MGI"/>
</dbReference>
<dbReference type="FunFam" id="3.30.260.10:FF:000016">
    <property type="entry name" value="McKusick-Kaufman syndrome"/>
    <property type="match status" value="1"/>
</dbReference>
<dbReference type="Gene3D" id="3.50.7.10">
    <property type="entry name" value="GroEL"/>
    <property type="match status" value="1"/>
</dbReference>
<dbReference type="Gene3D" id="1.10.560.10">
    <property type="entry name" value="GroEL-like equatorial domain"/>
    <property type="match status" value="1"/>
</dbReference>
<dbReference type="Gene3D" id="3.30.260.10">
    <property type="entry name" value="TCP-1-like chaperonin intermediate domain"/>
    <property type="match status" value="1"/>
</dbReference>
<dbReference type="InterPro" id="IPR002423">
    <property type="entry name" value="Cpn60/GroEL/TCP-1"/>
</dbReference>
<dbReference type="InterPro" id="IPR027409">
    <property type="entry name" value="GroEL-like_apical_dom_sf"/>
</dbReference>
<dbReference type="InterPro" id="IPR027413">
    <property type="entry name" value="GROEL-like_equatorial_sf"/>
</dbReference>
<dbReference type="InterPro" id="IPR028790">
    <property type="entry name" value="MKKS"/>
</dbReference>
<dbReference type="InterPro" id="IPR027410">
    <property type="entry name" value="TCP-1-like_intermed_sf"/>
</dbReference>
<dbReference type="PANTHER" id="PTHR46787:SF1">
    <property type="entry name" value="MOLECULAR CHAPERONE MKKS"/>
    <property type="match status" value="1"/>
</dbReference>
<dbReference type="PANTHER" id="PTHR46787">
    <property type="entry name" value="SYNDROMES PUTATIVE CHAPERONIN-RELATED"/>
    <property type="match status" value="1"/>
</dbReference>
<dbReference type="Pfam" id="PF00118">
    <property type="entry name" value="Cpn60_TCP1"/>
    <property type="match status" value="1"/>
</dbReference>
<dbReference type="SUPFAM" id="SSF52029">
    <property type="entry name" value="GroEL apical domain-like"/>
    <property type="match status" value="1"/>
</dbReference>
<dbReference type="SUPFAM" id="SSF48592">
    <property type="entry name" value="GroEL equatorial domain-like"/>
    <property type="match status" value="1"/>
</dbReference>
<gene>
    <name type="primary">Mkks</name>
    <name type="synonym">Bbs6</name>
</gene>
<comment type="function">
    <text evidence="1 6">Probable molecular chaperone that assists the folding of proteins upon ATP hydrolysis (By similarity). Plays a role in the assembly of BBSome, a complex involved in ciliogenesis regulating transports vesicles to the cilia (PubMed:28753627). May play a role in protein processing in limb, cardiac and reproductive system development. May play a role in cytokinesis (By similarity).</text>
</comment>
<comment type="subunit">
    <text evidence="1">Component of a complex composed at least of MKKS, BBS10, BBS12, TCP1, CCT2, CCT3, CCT4, CCT5 and CCT8. Interacts with STUB1. Interacts with BBS2 (via coiled coil domain). Interacts with CCDC28B. Interacts with BBS12. Interacts with SMARCC1, a component of the SWI/SNF complexes; the interaction takes place predominantly in the cytoplasm and may modulate SMARCC1 location (By similarity). Interacts with DLEC1 (By similarity).</text>
</comment>
<comment type="subcellular location">
    <subcellularLocation>
        <location evidence="1">Cytoplasm</location>
        <location evidence="1">Cytoskeleton</location>
        <location evidence="1">Microtubule organizing center</location>
        <location evidence="1">Centrosome</location>
    </subcellularLocation>
    <subcellularLocation>
        <location evidence="1">Cytoplasm</location>
        <location evidence="1">Cytosol</location>
    </subcellularLocation>
    <subcellularLocation>
        <location evidence="1">Nucleus</location>
    </subcellularLocation>
    <text evidence="1">The majority of the protein resides within the pericentriolar material (PCM), a proteinaceous tube surrounding centrioles. During interphase, the protein is confined to the lateral surfaces of the PCM but during mitosis it relocalizes throughout the PCM and is found at the intercellular bridge. The MKSS protein is highly mobile and rapidly shuttles between the cytosol and centrosome.</text>
</comment>
<comment type="tissue specificity">
    <text evidence="3">Widely expressed in adult and fetal tissues. Expressed in the developing heart, brain retina, limb buds, as well as in the developing neural tube. Expressed in the embryo in the first and second branchial arches. Expressed in parafin embedded tissue sections of brain, kidney, retina, olfactory epithelium and the ependymal layer of ventricles. Detected only in restricted regions of these tissue sections, including the ciliated border of renal tubules, the connecting cilium and the inner and outer nuclear layers of retina, and the ciliated layer of olfactory epithelia.</text>
</comment>
<comment type="disruption phenotype">
    <text evidence="4 5">Mice demonstrate retinal degeneration, failure of spermatozoa flagella formation, elevated blood pressure, olfactory deficits, and social dominance, but no polydactyly nor vaginal abnormalities. The phenotype closely resembles the phenotype of other mouse models of Bardet-Biedl syndrome (Bbs2 deficient and Bbs4 deficient). Obesity is associated with hyperleptinemia and resistance to the anorectic and weight-reducing effects of leptin. Although mice are resistant to the metabolic actions of leptin, mice remain responsive to the effects of leptin on renal sympathetic nerve activity and arterial pressure and develop hypertension. BBS mice have decreased hypothalamic expression of proopiomelanocortin (POMC). BBS genes play an important role in maintaining leptin sensitivity in POMC neurons.</text>
</comment>
<comment type="similarity">
    <text evidence="7">Belongs to the TCP-1 chaperonin family.</text>
</comment>
<organism>
    <name type="scientific">Mus musculus</name>
    <name type="common">Mouse</name>
    <dbReference type="NCBI Taxonomy" id="10090"/>
    <lineage>
        <taxon>Eukaryota</taxon>
        <taxon>Metazoa</taxon>
        <taxon>Chordata</taxon>
        <taxon>Craniata</taxon>
        <taxon>Vertebrata</taxon>
        <taxon>Euteleostomi</taxon>
        <taxon>Mammalia</taxon>
        <taxon>Eutheria</taxon>
        <taxon>Euarchontoglires</taxon>
        <taxon>Glires</taxon>
        <taxon>Rodentia</taxon>
        <taxon>Myomorpha</taxon>
        <taxon>Muroidea</taxon>
        <taxon>Muridae</taxon>
        <taxon>Murinae</taxon>
        <taxon>Mus</taxon>
        <taxon>Mus</taxon>
    </lineage>
</organism>
<sequence>MSRLEAKKPSLCKTEPLTSEKVRSTLSVLKGVIASCYGPSGRLKQLHNGLGGCVYTTSQSSALLRNLSVTHPVLKILTSSVQNHVSCFSDCGLFTAILCCNLIENIQRLDLTPATAIKLNKYLLSLCTSYLKSEACSCRIPVDFRSTHTFLSLVHSILTSKPACMLTRKETDHIGALILKAFLLTIPESTEERMVLGKSIIVPLKGQRVTDSTVLPGLLIEASEVQLRRLLPTQKASGLRVALFCTSLSGDFSNAGEGVVVAHYQVSLENAVLEQLLNLGRRLVTDHVDLVLCQKVIHPSLKQFFSERHVMAIDRVGVTLMESLSKVTGATPIGSLNPIVSTTYGSVKDVCSARFGSKHFFHLLPNEATVCTLLLCSRNDTAWEELKLTCQTAMHVLQLTIKEPWVLLGGGCTETHLAAYVRHKVHHEAEAIVRDDGCTQAKLHVAAEAFCSALESVAGSLEHDGGEILIDTKYGHLWSCQADSASVGNWSDTLSRCGCGLYNSQEELSWSVLRSTYHPFAPQTCLPQAALGSASNLTVDCFTAKLSGLQVAVETANLILDLSYVIEDKN</sequence>
<keyword id="KW-0067">ATP-binding</keyword>
<keyword id="KW-0143">Chaperone</keyword>
<keyword id="KW-0963">Cytoplasm</keyword>
<keyword id="KW-0206">Cytoskeleton</keyword>
<keyword id="KW-0547">Nucleotide-binding</keyword>
<keyword id="KW-0539">Nucleus</keyword>
<keyword id="KW-1185">Reference proteome</keyword>
<name>MKKS_MOUSE</name>
<proteinExistence type="evidence at transcript level"/>
<reference key="1">
    <citation type="journal article" date="2000" name="Nat. Genet.">
        <title>Mutation of a gene encoding a putative chaperonin causes McKusick-Kaufman syndrome.</title>
        <authorList>
            <person name="Stone D.L."/>
            <person name="Slavotinek A.M."/>
            <person name="Bouffard G.G."/>
            <person name="Banerjee-Basu S."/>
            <person name="Baxevanis A.D."/>
            <person name="Barr M."/>
            <person name="Biesecker L.G."/>
        </authorList>
    </citation>
    <scope>NUCLEOTIDE SEQUENCE [MRNA]</scope>
</reference>
<reference key="2">
    <citation type="journal article" date="2005" name="Science">
        <title>The transcriptional landscape of the mammalian genome.</title>
        <authorList>
            <person name="Carninci P."/>
            <person name="Kasukawa T."/>
            <person name="Katayama S."/>
            <person name="Gough J."/>
            <person name="Frith M.C."/>
            <person name="Maeda N."/>
            <person name="Oyama R."/>
            <person name="Ravasi T."/>
            <person name="Lenhard B."/>
            <person name="Wells C."/>
            <person name="Kodzius R."/>
            <person name="Shimokawa K."/>
            <person name="Bajic V.B."/>
            <person name="Brenner S.E."/>
            <person name="Batalov S."/>
            <person name="Forrest A.R."/>
            <person name="Zavolan M."/>
            <person name="Davis M.J."/>
            <person name="Wilming L.G."/>
            <person name="Aidinis V."/>
            <person name="Allen J.E."/>
            <person name="Ambesi-Impiombato A."/>
            <person name="Apweiler R."/>
            <person name="Aturaliya R.N."/>
            <person name="Bailey T.L."/>
            <person name="Bansal M."/>
            <person name="Baxter L."/>
            <person name="Beisel K.W."/>
            <person name="Bersano T."/>
            <person name="Bono H."/>
            <person name="Chalk A.M."/>
            <person name="Chiu K.P."/>
            <person name="Choudhary V."/>
            <person name="Christoffels A."/>
            <person name="Clutterbuck D.R."/>
            <person name="Crowe M.L."/>
            <person name="Dalla E."/>
            <person name="Dalrymple B.P."/>
            <person name="de Bono B."/>
            <person name="Della Gatta G."/>
            <person name="di Bernardo D."/>
            <person name="Down T."/>
            <person name="Engstrom P."/>
            <person name="Fagiolini M."/>
            <person name="Faulkner G."/>
            <person name="Fletcher C.F."/>
            <person name="Fukushima T."/>
            <person name="Furuno M."/>
            <person name="Futaki S."/>
            <person name="Gariboldi M."/>
            <person name="Georgii-Hemming P."/>
            <person name="Gingeras T.R."/>
            <person name="Gojobori T."/>
            <person name="Green R.E."/>
            <person name="Gustincich S."/>
            <person name="Harbers M."/>
            <person name="Hayashi Y."/>
            <person name="Hensch T.K."/>
            <person name="Hirokawa N."/>
            <person name="Hill D."/>
            <person name="Huminiecki L."/>
            <person name="Iacono M."/>
            <person name="Ikeo K."/>
            <person name="Iwama A."/>
            <person name="Ishikawa T."/>
            <person name="Jakt M."/>
            <person name="Kanapin A."/>
            <person name="Katoh M."/>
            <person name="Kawasawa Y."/>
            <person name="Kelso J."/>
            <person name="Kitamura H."/>
            <person name="Kitano H."/>
            <person name="Kollias G."/>
            <person name="Krishnan S.P."/>
            <person name="Kruger A."/>
            <person name="Kummerfeld S.K."/>
            <person name="Kurochkin I.V."/>
            <person name="Lareau L.F."/>
            <person name="Lazarevic D."/>
            <person name="Lipovich L."/>
            <person name="Liu J."/>
            <person name="Liuni S."/>
            <person name="McWilliam S."/>
            <person name="Madan Babu M."/>
            <person name="Madera M."/>
            <person name="Marchionni L."/>
            <person name="Matsuda H."/>
            <person name="Matsuzawa S."/>
            <person name="Miki H."/>
            <person name="Mignone F."/>
            <person name="Miyake S."/>
            <person name="Morris K."/>
            <person name="Mottagui-Tabar S."/>
            <person name="Mulder N."/>
            <person name="Nakano N."/>
            <person name="Nakauchi H."/>
            <person name="Ng P."/>
            <person name="Nilsson R."/>
            <person name="Nishiguchi S."/>
            <person name="Nishikawa S."/>
            <person name="Nori F."/>
            <person name="Ohara O."/>
            <person name="Okazaki Y."/>
            <person name="Orlando V."/>
            <person name="Pang K.C."/>
            <person name="Pavan W.J."/>
            <person name="Pavesi G."/>
            <person name="Pesole G."/>
            <person name="Petrovsky N."/>
            <person name="Piazza S."/>
            <person name="Reed J."/>
            <person name="Reid J.F."/>
            <person name="Ring B.Z."/>
            <person name="Ringwald M."/>
            <person name="Rost B."/>
            <person name="Ruan Y."/>
            <person name="Salzberg S.L."/>
            <person name="Sandelin A."/>
            <person name="Schneider C."/>
            <person name="Schoenbach C."/>
            <person name="Sekiguchi K."/>
            <person name="Semple C.A."/>
            <person name="Seno S."/>
            <person name="Sessa L."/>
            <person name="Sheng Y."/>
            <person name="Shibata Y."/>
            <person name="Shimada H."/>
            <person name="Shimada K."/>
            <person name="Silva D."/>
            <person name="Sinclair B."/>
            <person name="Sperling S."/>
            <person name="Stupka E."/>
            <person name="Sugiura K."/>
            <person name="Sultana R."/>
            <person name="Takenaka Y."/>
            <person name="Taki K."/>
            <person name="Tammoja K."/>
            <person name="Tan S.L."/>
            <person name="Tang S."/>
            <person name="Taylor M.S."/>
            <person name="Tegner J."/>
            <person name="Teichmann S.A."/>
            <person name="Ueda H.R."/>
            <person name="van Nimwegen E."/>
            <person name="Verardo R."/>
            <person name="Wei C.L."/>
            <person name="Yagi K."/>
            <person name="Yamanishi H."/>
            <person name="Zabarovsky E."/>
            <person name="Zhu S."/>
            <person name="Zimmer A."/>
            <person name="Hide W."/>
            <person name="Bult C."/>
            <person name="Grimmond S.M."/>
            <person name="Teasdale R.D."/>
            <person name="Liu E.T."/>
            <person name="Brusic V."/>
            <person name="Quackenbush J."/>
            <person name="Wahlestedt C."/>
            <person name="Mattick J.S."/>
            <person name="Hume D.A."/>
            <person name="Kai C."/>
            <person name="Sasaki D."/>
            <person name="Tomaru Y."/>
            <person name="Fukuda S."/>
            <person name="Kanamori-Katayama M."/>
            <person name="Suzuki M."/>
            <person name="Aoki J."/>
            <person name="Arakawa T."/>
            <person name="Iida J."/>
            <person name="Imamura K."/>
            <person name="Itoh M."/>
            <person name="Kato T."/>
            <person name="Kawaji H."/>
            <person name="Kawagashira N."/>
            <person name="Kawashima T."/>
            <person name="Kojima M."/>
            <person name="Kondo S."/>
            <person name="Konno H."/>
            <person name="Nakano K."/>
            <person name="Ninomiya N."/>
            <person name="Nishio T."/>
            <person name="Okada M."/>
            <person name="Plessy C."/>
            <person name="Shibata K."/>
            <person name="Shiraki T."/>
            <person name="Suzuki S."/>
            <person name="Tagami M."/>
            <person name="Waki K."/>
            <person name="Watahiki A."/>
            <person name="Okamura-Oho Y."/>
            <person name="Suzuki H."/>
            <person name="Kawai J."/>
            <person name="Hayashizaki Y."/>
        </authorList>
    </citation>
    <scope>NUCLEOTIDE SEQUENCE [LARGE SCALE MRNA]</scope>
    <source>
        <strain>C57BL/6J</strain>
        <tissue>Olfactory bulb</tissue>
    </source>
</reference>
<reference key="3">
    <citation type="journal article" date="2009" name="PLoS Biol.">
        <title>Lineage-specific biology revealed by a finished genome assembly of the mouse.</title>
        <authorList>
            <person name="Church D.M."/>
            <person name="Goodstadt L."/>
            <person name="Hillier L.W."/>
            <person name="Zody M.C."/>
            <person name="Goldstein S."/>
            <person name="She X."/>
            <person name="Bult C.J."/>
            <person name="Agarwala R."/>
            <person name="Cherry J.L."/>
            <person name="DiCuccio M."/>
            <person name="Hlavina W."/>
            <person name="Kapustin Y."/>
            <person name="Meric P."/>
            <person name="Maglott D."/>
            <person name="Birtle Z."/>
            <person name="Marques A.C."/>
            <person name="Graves T."/>
            <person name="Zhou S."/>
            <person name="Teague B."/>
            <person name="Potamousis K."/>
            <person name="Churas C."/>
            <person name="Place M."/>
            <person name="Herschleb J."/>
            <person name="Runnheim R."/>
            <person name="Forrest D."/>
            <person name="Amos-Landgraf J."/>
            <person name="Schwartz D.C."/>
            <person name="Cheng Z."/>
            <person name="Lindblad-Toh K."/>
            <person name="Eichler E.E."/>
            <person name="Ponting C.P."/>
        </authorList>
    </citation>
    <scope>NUCLEOTIDE SEQUENCE [LARGE SCALE GENOMIC DNA]</scope>
    <source>
        <strain>C57BL/6J</strain>
    </source>
</reference>
<reference key="4">
    <citation type="journal article" date="2004" name="Genome Res.">
        <title>The status, quality, and expansion of the NIH full-length cDNA project: the Mammalian Gene Collection (MGC).</title>
        <authorList>
            <consortium name="The MGC Project Team"/>
        </authorList>
    </citation>
    <scope>NUCLEOTIDE SEQUENCE [LARGE SCALE MRNA]</scope>
</reference>
<reference key="5">
    <citation type="journal article" date="2005" name="Hum. Mol. Genet.">
        <title>Mkks-null mice have a phenotype resembling Bardet-Biedl syndrome.</title>
        <authorList>
            <person name="Fath M.A."/>
            <person name="Mullins R.F."/>
            <person name="Searby C."/>
            <person name="Nishimura D.Y."/>
            <person name="Wei J."/>
            <person name="Rahmouni K."/>
            <person name="Davis R.E."/>
            <person name="Tayeh M.K."/>
            <person name="Andrews M."/>
            <person name="Yang B."/>
            <person name="Sigmund C.D."/>
            <person name="Stone E.M."/>
            <person name="Sheffield V.C."/>
        </authorList>
    </citation>
    <scope>DISRUPTION PHENOTYPE</scope>
</reference>
<reference key="6">
    <citation type="journal article" date="2005" name="J. Cell Sci.">
        <title>MKKS/BBS6, a divergent chaperonin-like protein linked to the obesity disorder Bardet-Biedl syndrome, is a novel centrosomal component required for cytokinesis.</title>
        <authorList>
            <person name="Kim J.C."/>
            <person name="Ou Y.Y."/>
            <person name="Badano J.L."/>
            <person name="Esmail M.A."/>
            <person name="Leitch C.C."/>
            <person name="Fiedrich E."/>
            <person name="Beales P.L."/>
            <person name="Archibald J.M."/>
            <person name="Katsanis N."/>
            <person name="Rattner J.B."/>
            <person name="Leroux M.R."/>
        </authorList>
    </citation>
    <scope>TISSUE SPECIFICITY</scope>
</reference>
<reference key="7">
    <citation type="journal article" date="2008" name="J. Clin. Invest.">
        <title>Leptin resistance contributes to obesity and hypertension in mouse models of Bardet-Biedl syndrome.</title>
        <authorList>
            <person name="Rahmouni K."/>
            <person name="Fath M.A."/>
            <person name="Seo S."/>
            <person name="Thedens D.R."/>
            <person name="Berry C.J."/>
            <person name="Weiss R."/>
            <person name="Nishimura D.Y."/>
            <person name="Sheffield V.C."/>
        </authorList>
    </citation>
    <scope>DISRUPTION PHENOTYPE</scope>
</reference>
<reference key="8">
    <citation type="journal article" date="2017" name="PLoS Genet.">
        <title>Nuclear/cytoplasmic transport defects in BBS6 underlie congenital heart disease through perturbation of a chromatin remodeling protein.</title>
        <authorList>
            <person name="Scott C.A."/>
            <person name="Marsden A.N."/>
            <person name="Rebagliati M.R."/>
            <person name="Zhang Q."/>
            <person name="Chamling X."/>
            <person name="Searby C.C."/>
            <person name="Baye L.M."/>
            <person name="Sheffield V.C."/>
            <person name="Slusarski D.C."/>
        </authorList>
    </citation>
    <scope>FUNCTION</scope>
</reference>